<accession>P0CO39</accession>
<accession>Q55WI4</accession>
<accession>Q5KJR1</accession>
<protein>
    <recommendedName>
        <fullName>Transcription factor IWS1</fullName>
    </recommendedName>
</protein>
<comment type="function">
    <text evidence="1">Transcription factor involved in RNA polymerase II transcription regulation. May function in both SPT15/TBP post-recruitment and recruitment steps of transcription (By similarity).</text>
</comment>
<comment type="subcellular location">
    <subcellularLocation>
        <location evidence="2">Nucleus</location>
    </subcellularLocation>
</comment>
<comment type="similarity">
    <text evidence="4">Belongs to the IWS1 family.</text>
</comment>
<evidence type="ECO:0000250" key="1"/>
<evidence type="ECO:0000255" key="2">
    <source>
        <dbReference type="PROSITE-ProRule" id="PRU00649"/>
    </source>
</evidence>
<evidence type="ECO:0000256" key="3">
    <source>
        <dbReference type="SAM" id="MobiDB-lite"/>
    </source>
</evidence>
<evidence type="ECO:0000305" key="4"/>
<keyword id="KW-0539">Nucleus</keyword>
<keyword id="KW-0804">Transcription</keyword>
<keyword id="KW-0805">Transcription regulation</keyword>
<sequence length="475" mass="54385">MSSPALDTIHDQTGEQDLHQEVQAQEHLPVEPTPEVQEEPESDHQDDDEQPEAQVLEQEQEQVAEQERLQDQEDQDQGAELVSQQPTAEEQEETRDELYNEVFGNQGSEASDLSDDEDVRMDEGEKYVPATATSAAKIPKFKKSKRDDEDEDEDEDEDEDDGGERRRKKKKRAERRRQRQEEEDEDEAPVLDEATQRRLALEERIDAIGKKPKAIRRKKKGDDDVDIVDSYHDDICARLRDRMIAAADKDEAANRIKMPGTAKLAMLDEVMGVLRNTTLWQSIVDNGVLEAVKRWLEPLPDKSLPSVGIQKAIFEVLPKMDLDTTTLKECRLGPIVLFYTKTKRVTPAINRQADALVQAWSRPIIKRPANYRSRYIESQNEVEQSQGGGGTGGGYSQSQRGPGERKFKRFDVKKALEENAHRKGARLQIVQDVQYTVAPEPKTHHHAEEMQHVSRIQQDNKKFNRFARQVKTKKH</sequence>
<feature type="chain" id="PRO_0000410124" description="Transcription factor IWS1">
    <location>
        <begin position="1"/>
        <end position="475"/>
    </location>
</feature>
<feature type="domain" description="TFIIS N-terminal" evidence="2">
    <location>
        <begin position="290"/>
        <end position="367"/>
    </location>
</feature>
<feature type="region of interest" description="Disordered" evidence="3">
    <location>
        <begin position="1"/>
        <end position="195"/>
    </location>
</feature>
<feature type="region of interest" description="Disordered" evidence="3">
    <location>
        <begin position="379"/>
        <end position="406"/>
    </location>
</feature>
<feature type="compositionally biased region" description="Basic and acidic residues" evidence="3">
    <location>
        <begin position="8"/>
        <end position="20"/>
    </location>
</feature>
<feature type="compositionally biased region" description="Acidic residues" evidence="3">
    <location>
        <begin position="36"/>
        <end position="51"/>
    </location>
</feature>
<feature type="compositionally biased region" description="Acidic residues" evidence="3">
    <location>
        <begin position="148"/>
        <end position="162"/>
    </location>
</feature>
<feature type="compositionally biased region" description="Basic residues" evidence="3">
    <location>
        <begin position="165"/>
        <end position="178"/>
    </location>
</feature>
<feature type="compositionally biased region" description="Acidic residues" evidence="3">
    <location>
        <begin position="181"/>
        <end position="190"/>
    </location>
</feature>
<feature type="compositionally biased region" description="Gly residues" evidence="3">
    <location>
        <begin position="386"/>
        <end position="395"/>
    </location>
</feature>
<reference key="1">
    <citation type="journal article" date="2005" name="Science">
        <title>The genome of the basidiomycetous yeast and human pathogen Cryptococcus neoformans.</title>
        <authorList>
            <person name="Loftus B.J."/>
            <person name="Fung E."/>
            <person name="Roncaglia P."/>
            <person name="Rowley D."/>
            <person name="Amedeo P."/>
            <person name="Bruno D."/>
            <person name="Vamathevan J."/>
            <person name="Miranda M."/>
            <person name="Anderson I.J."/>
            <person name="Fraser J.A."/>
            <person name="Allen J.E."/>
            <person name="Bosdet I.E."/>
            <person name="Brent M.R."/>
            <person name="Chiu R."/>
            <person name="Doering T.L."/>
            <person name="Donlin M.J."/>
            <person name="D'Souza C.A."/>
            <person name="Fox D.S."/>
            <person name="Grinberg V."/>
            <person name="Fu J."/>
            <person name="Fukushima M."/>
            <person name="Haas B.J."/>
            <person name="Huang J.C."/>
            <person name="Janbon G."/>
            <person name="Jones S.J.M."/>
            <person name="Koo H.L."/>
            <person name="Krzywinski M.I."/>
            <person name="Kwon-Chung K.J."/>
            <person name="Lengeler K.B."/>
            <person name="Maiti R."/>
            <person name="Marra M.A."/>
            <person name="Marra R.E."/>
            <person name="Mathewson C.A."/>
            <person name="Mitchell T.G."/>
            <person name="Pertea M."/>
            <person name="Riggs F.R."/>
            <person name="Salzberg S.L."/>
            <person name="Schein J.E."/>
            <person name="Shvartsbeyn A."/>
            <person name="Shin H."/>
            <person name="Shumway M."/>
            <person name="Specht C.A."/>
            <person name="Suh B.B."/>
            <person name="Tenney A."/>
            <person name="Utterback T.R."/>
            <person name="Wickes B.L."/>
            <person name="Wortman J.R."/>
            <person name="Wye N.H."/>
            <person name="Kronstad J.W."/>
            <person name="Lodge J.K."/>
            <person name="Heitman J."/>
            <person name="Davis R.W."/>
            <person name="Fraser C.M."/>
            <person name="Hyman R.W."/>
        </authorList>
    </citation>
    <scope>NUCLEOTIDE SEQUENCE [LARGE SCALE GENOMIC DNA]</scope>
    <source>
        <strain>B-3501A</strain>
    </source>
</reference>
<dbReference type="EMBL" id="AAEY01000013">
    <property type="protein sequence ID" value="EAL22015.1"/>
    <property type="molecule type" value="Genomic_DNA"/>
</dbReference>
<dbReference type="RefSeq" id="XP_776662.1">
    <property type="nucleotide sequence ID" value="XM_771569.1"/>
</dbReference>
<dbReference type="SMR" id="P0CO39"/>
<dbReference type="EnsemblFungi" id="AAW42473">
    <property type="protein sequence ID" value="AAW42473"/>
    <property type="gene ID" value="CNC05650"/>
</dbReference>
<dbReference type="GeneID" id="4934819"/>
<dbReference type="KEGG" id="cnb:CNBC1540"/>
<dbReference type="VEuPathDB" id="FungiDB:CNBC1540"/>
<dbReference type="HOGENOM" id="CLU_045275_2_2_1"/>
<dbReference type="OrthoDB" id="9276at5206"/>
<dbReference type="GO" id="GO:0005634">
    <property type="term" value="C:nucleus"/>
    <property type="evidence" value="ECO:0007669"/>
    <property type="project" value="UniProtKB-SubCell"/>
</dbReference>
<dbReference type="GO" id="GO:0016973">
    <property type="term" value="P:poly(A)+ mRNA export from nucleus"/>
    <property type="evidence" value="ECO:0007669"/>
    <property type="project" value="TreeGrafter"/>
</dbReference>
<dbReference type="FunFam" id="1.20.930.10:FF:000013">
    <property type="entry name" value="Transcription factor IWS1"/>
    <property type="match status" value="1"/>
</dbReference>
<dbReference type="Gene3D" id="1.20.930.10">
    <property type="entry name" value="Conserved domain common to transcription factors TFIIS, elongin A, CRSP70"/>
    <property type="match status" value="1"/>
</dbReference>
<dbReference type="InterPro" id="IPR051037">
    <property type="entry name" value="RNAPII_TF_IWS1"/>
</dbReference>
<dbReference type="InterPro" id="IPR035441">
    <property type="entry name" value="TFIIS/LEDGF_dom_sf"/>
</dbReference>
<dbReference type="InterPro" id="IPR017923">
    <property type="entry name" value="TFIIS_N"/>
</dbReference>
<dbReference type="PANTHER" id="PTHR46010">
    <property type="entry name" value="PROTEIN IWS1 HOMOLOG"/>
    <property type="match status" value="1"/>
</dbReference>
<dbReference type="PANTHER" id="PTHR46010:SF1">
    <property type="entry name" value="PROTEIN IWS1 HOMOLOG"/>
    <property type="match status" value="1"/>
</dbReference>
<dbReference type="Pfam" id="PF08711">
    <property type="entry name" value="Med26"/>
    <property type="match status" value="1"/>
</dbReference>
<dbReference type="PROSITE" id="PS51319">
    <property type="entry name" value="TFIIS_N"/>
    <property type="match status" value="1"/>
</dbReference>
<gene>
    <name type="primary">IWS1</name>
    <name type="ordered locus">CNBC1540</name>
</gene>
<name>IWS1_CRYNB</name>
<organism>
    <name type="scientific">Cryptococcus neoformans var. neoformans serotype D (strain B-3501A)</name>
    <name type="common">Filobasidiella neoformans</name>
    <dbReference type="NCBI Taxonomy" id="283643"/>
    <lineage>
        <taxon>Eukaryota</taxon>
        <taxon>Fungi</taxon>
        <taxon>Dikarya</taxon>
        <taxon>Basidiomycota</taxon>
        <taxon>Agaricomycotina</taxon>
        <taxon>Tremellomycetes</taxon>
        <taxon>Tremellales</taxon>
        <taxon>Cryptococcaceae</taxon>
        <taxon>Cryptococcus</taxon>
        <taxon>Cryptococcus neoformans species complex</taxon>
    </lineage>
</organism>
<proteinExistence type="inferred from homology"/>